<accession>A1KU22</accession>
<feature type="chain" id="PRO_1000061877" description="UPF0250 protein NMC1112">
    <location>
        <begin position="1"/>
        <end position="91"/>
    </location>
</feature>
<protein>
    <recommendedName>
        <fullName evidence="1">UPF0250 protein NMC1112</fullName>
    </recommendedName>
</protein>
<proteinExistence type="inferred from homology"/>
<dbReference type="EMBL" id="AM421808">
    <property type="protein sequence ID" value="CAM10363.1"/>
    <property type="molecule type" value="Genomic_DNA"/>
</dbReference>
<dbReference type="RefSeq" id="WP_002213528.1">
    <property type="nucleotide sequence ID" value="NC_008767.1"/>
</dbReference>
<dbReference type="SMR" id="A1KU22"/>
<dbReference type="KEGG" id="nmc:NMC1112"/>
<dbReference type="HOGENOM" id="CLU_161438_1_2_4"/>
<dbReference type="Proteomes" id="UP000002286">
    <property type="component" value="Chromosome"/>
</dbReference>
<dbReference type="Gene3D" id="3.30.70.260">
    <property type="match status" value="1"/>
</dbReference>
<dbReference type="HAMAP" id="MF_00659">
    <property type="entry name" value="UPF0250"/>
    <property type="match status" value="1"/>
</dbReference>
<dbReference type="InterPro" id="IPR007454">
    <property type="entry name" value="UPF0250_YbeD-like"/>
</dbReference>
<dbReference type="InterPro" id="IPR027471">
    <property type="entry name" value="YbeD-like_sf"/>
</dbReference>
<dbReference type="PANTHER" id="PTHR38036">
    <property type="entry name" value="UPF0250 PROTEIN YBED"/>
    <property type="match status" value="1"/>
</dbReference>
<dbReference type="PANTHER" id="PTHR38036:SF1">
    <property type="entry name" value="UPF0250 PROTEIN YBED"/>
    <property type="match status" value="1"/>
</dbReference>
<dbReference type="Pfam" id="PF04359">
    <property type="entry name" value="DUF493"/>
    <property type="match status" value="1"/>
</dbReference>
<dbReference type="SUPFAM" id="SSF117991">
    <property type="entry name" value="YbeD/HP0495-like"/>
    <property type="match status" value="1"/>
</dbReference>
<gene>
    <name type="ordered locus">NMC1112</name>
</gene>
<comment type="similarity">
    <text evidence="1">Belongs to the UPF0250 family.</text>
</comment>
<evidence type="ECO:0000255" key="1">
    <source>
        <dbReference type="HAMAP-Rule" id="MF_00659"/>
    </source>
</evidence>
<name>Y1112_NEIMF</name>
<reference key="1">
    <citation type="journal article" date="2007" name="PLoS Genet.">
        <title>Meningococcal genetic variation mechanisms viewed through comparative analysis of serogroup C strain FAM18.</title>
        <authorList>
            <person name="Bentley S.D."/>
            <person name="Vernikos G.S."/>
            <person name="Snyder L.A.S."/>
            <person name="Churcher C."/>
            <person name="Arrowsmith C."/>
            <person name="Chillingworth T."/>
            <person name="Cronin A."/>
            <person name="Davis P.H."/>
            <person name="Holroyd N.E."/>
            <person name="Jagels K."/>
            <person name="Maddison M."/>
            <person name="Moule S."/>
            <person name="Rabbinowitsch E."/>
            <person name="Sharp S."/>
            <person name="Unwin L."/>
            <person name="Whitehead S."/>
            <person name="Quail M.A."/>
            <person name="Achtman M."/>
            <person name="Barrell B.G."/>
            <person name="Saunders N.J."/>
            <person name="Parkhill J."/>
        </authorList>
    </citation>
    <scope>NUCLEOTIDE SEQUENCE [LARGE SCALE GENOMIC DNA]</scope>
    <source>
        <strain>ATCC 700532 / DSM 15464 / FAM18</strain>
    </source>
</reference>
<sequence length="91" mass="10227">MTEQKNKTSLIEFPCTFPLKVMGAVHPEFEQAVLDTVRLHAPDTQAHHITTRPSSKGNYTGATVQVKVENQEQLDNIYRALTSHKLVKVVL</sequence>
<organism>
    <name type="scientific">Neisseria meningitidis serogroup C / serotype 2a (strain ATCC 700532 / DSM 15464 / FAM18)</name>
    <dbReference type="NCBI Taxonomy" id="272831"/>
    <lineage>
        <taxon>Bacteria</taxon>
        <taxon>Pseudomonadati</taxon>
        <taxon>Pseudomonadota</taxon>
        <taxon>Betaproteobacteria</taxon>
        <taxon>Neisseriales</taxon>
        <taxon>Neisseriaceae</taxon>
        <taxon>Neisseria</taxon>
    </lineage>
</organism>